<organism evidence="9">
    <name type="scientific">Papilio xuthus</name>
    <name type="common">Asian swallowtail butterfly</name>
    <dbReference type="NCBI Taxonomy" id="66420"/>
    <lineage>
        <taxon>Eukaryota</taxon>
        <taxon>Metazoa</taxon>
        <taxon>Ecdysozoa</taxon>
        <taxon>Arthropoda</taxon>
        <taxon>Hexapoda</taxon>
        <taxon>Insecta</taxon>
        <taxon>Pterygota</taxon>
        <taxon>Neoptera</taxon>
        <taxon>Endopterygota</taxon>
        <taxon>Lepidoptera</taxon>
        <taxon>Glossata</taxon>
        <taxon>Ditrysia</taxon>
        <taxon>Papilionoidea</taxon>
        <taxon>Papilionidae</taxon>
        <taxon>Papilioninae</taxon>
        <taxon>Papilio</taxon>
    </lineage>
</organism>
<dbReference type="EC" id="1.16.3.1" evidence="5"/>
<dbReference type="EMBL" id="AK401292">
    <property type="protein sequence ID" value="BAM17914.1"/>
    <property type="molecule type" value="mRNA"/>
</dbReference>
<dbReference type="EMBL" id="KQ459249">
    <property type="protein sequence ID" value="KPJ02301.1"/>
    <property type="molecule type" value="Genomic_DNA"/>
</dbReference>
<dbReference type="RefSeq" id="NP_001306957.1">
    <property type="nucleotide sequence ID" value="NM_001320028.1"/>
</dbReference>
<dbReference type="SMR" id="I4DJ24"/>
<dbReference type="STRING" id="66420.I4DJ24"/>
<dbReference type="GeneID" id="106115683"/>
<dbReference type="CTD" id="46415"/>
<dbReference type="OrthoDB" id="186462at2759"/>
<dbReference type="Proteomes" id="UP000053268">
    <property type="component" value="Unassembled WGS sequence"/>
</dbReference>
<dbReference type="Proteomes" id="UP000694872">
    <property type="component" value="Unplaced"/>
</dbReference>
<dbReference type="GO" id="GO:0005576">
    <property type="term" value="C:extracellular region"/>
    <property type="evidence" value="ECO:0007669"/>
    <property type="project" value="UniProtKB-SubCell"/>
</dbReference>
<dbReference type="GO" id="GO:0005794">
    <property type="term" value="C:Golgi apparatus"/>
    <property type="evidence" value="ECO:0007669"/>
    <property type="project" value="UniProtKB-SubCell"/>
</dbReference>
<dbReference type="GO" id="GO:0008199">
    <property type="term" value="F:ferric iron binding"/>
    <property type="evidence" value="ECO:0007669"/>
    <property type="project" value="InterPro"/>
</dbReference>
<dbReference type="GO" id="GO:0008198">
    <property type="term" value="F:ferrous iron binding"/>
    <property type="evidence" value="ECO:0007669"/>
    <property type="project" value="TreeGrafter"/>
</dbReference>
<dbReference type="GO" id="GO:0004322">
    <property type="term" value="F:ferroxidase activity"/>
    <property type="evidence" value="ECO:0007669"/>
    <property type="project" value="UniProtKB-EC"/>
</dbReference>
<dbReference type="GO" id="GO:0005506">
    <property type="term" value="F:iron ion binding"/>
    <property type="evidence" value="ECO:0000314"/>
    <property type="project" value="UniProtKB"/>
</dbReference>
<dbReference type="GO" id="GO:0006879">
    <property type="term" value="P:intracellular iron ion homeostasis"/>
    <property type="evidence" value="ECO:0007669"/>
    <property type="project" value="UniProtKB-KW"/>
</dbReference>
<dbReference type="GO" id="GO:0006826">
    <property type="term" value="P:iron ion transport"/>
    <property type="evidence" value="ECO:0007669"/>
    <property type="project" value="InterPro"/>
</dbReference>
<dbReference type="CDD" id="cd01056">
    <property type="entry name" value="Euk_Ferritin"/>
    <property type="match status" value="1"/>
</dbReference>
<dbReference type="FunFam" id="1.20.1260.10:FF:000017">
    <property type="entry name" value="Ferritin"/>
    <property type="match status" value="1"/>
</dbReference>
<dbReference type="Gene3D" id="1.20.1260.10">
    <property type="match status" value="1"/>
</dbReference>
<dbReference type="InterPro" id="IPR001519">
    <property type="entry name" value="Ferritin"/>
</dbReference>
<dbReference type="InterPro" id="IPR012347">
    <property type="entry name" value="Ferritin-like"/>
</dbReference>
<dbReference type="InterPro" id="IPR009040">
    <property type="entry name" value="Ferritin-like_diiron"/>
</dbReference>
<dbReference type="InterPro" id="IPR009078">
    <property type="entry name" value="Ferritin-like_SF"/>
</dbReference>
<dbReference type="InterPro" id="IPR008331">
    <property type="entry name" value="Ferritin_DPS_dom"/>
</dbReference>
<dbReference type="PANTHER" id="PTHR11431">
    <property type="entry name" value="FERRITIN"/>
    <property type="match status" value="1"/>
</dbReference>
<dbReference type="PANTHER" id="PTHR11431:SF43">
    <property type="entry name" value="FERRITIN"/>
    <property type="match status" value="1"/>
</dbReference>
<dbReference type="Pfam" id="PF00210">
    <property type="entry name" value="Ferritin"/>
    <property type="match status" value="1"/>
</dbReference>
<dbReference type="SUPFAM" id="SSF47240">
    <property type="entry name" value="Ferritin-like"/>
    <property type="match status" value="1"/>
</dbReference>
<dbReference type="PROSITE" id="PS50905">
    <property type="entry name" value="FERRITIN_LIKE"/>
    <property type="match status" value="1"/>
</dbReference>
<gene>
    <name evidence="7" type="primary">PxFerHCH</name>
    <name evidence="10" type="ORF">RR46_08098</name>
</gene>
<accession>I4DJ24</accession>
<feature type="signal peptide" evidence="3">
    <location>
        <begin position="1"/>
        <end position="20"/>
    </location>
</feature>
<feature type="chain" id="PRO_5003687984" description="Ferritin heavy chain" evidence="3">
    <location>
        <begin position="21"/>
        <end position="211"/>
    </location>
</feature>
<feature type="domain" description="Ferritin-like diiron" evidence="4">
    <location>
        <begin position="35"/>
        <end position="191"/>
    </location>
</feature>
<feature type="binding site" evidence="4">
    <location>
        <position position="52"/>
    </location>
    <ligand>
        <name>Fe cation</name>
        <dbReference type="ChEBI" id="CHEBI:24875"/>
        <label>1</label>
    </ligand>
</feature>
<feature type="binding site" evidence="4">
    <location>
        <position position="87"/>
    </location>
    <ligand>
        <name>Fe cation</name>
        <dbReference type="ChEBI" id="CHEBI:24875"/>
        <label>1</label>
    </ligand>
</feature>
<feature type="binding site" evidence="4">
    <location>
        <position position="87"/>
    </location>
    <ligand>
        <name>Fe cation</name>
        <dbReference type="ChEBI" id="CHEBI:24875"/>
        <label>2</label>
    </ligand>
</feature>
<feature type="binding site" evidence="4">
    <location>
        <position position="90"/>
    </location>
    <ligand>
        <name>Fe cation</name>
        <dbReference type="ChEBI" id="CHEBI:24875"/>
        <label>1</label>
    </ligand>
</feature>
<feature type="binding site" evidence="4">
    <location>
        <position position="136"/>
    </location>
    <ligand>
        <name>Fe cation</name>
        <dbReference type="ChEBI" id="CHEBI:24875"/>
        <label>2</label>
    </ligand>
</feature>
<feature type="binding site" evidence="4">
    <location>
        <position position="173"/>
    </location>
    <ligand>
        <name>Fe cation</name>
        <dbReference type="ChEBI" id="CHEBI:24875"/>
        <label>2</label>
    </ligand>
</feature>
<feature type="disulfide bond" description="Interchain (with C-30 in light chain)" evidence="1">
    <location>
        <position position="23"/>
    </location>
</feature>
<feature type="disulfide bond" evidence="1">
    <location>
        <begin position="41"/>
        <end position="150"/>
    </location>
</feature>
<evidence type="ECO:0000250" key="1">
    <source>
        <dbReference type="UniProtKB" id="A0A7E5WTY7"/>
    </source>
</evidence>
<evidence type="ECO:0000250" key="2">
    <source>
        <dbReference type="UniProtKB" id="Q7KRU8"/>
    </source>
</evidence>
<evidence type="ECO:0000255" key="3"/>
<evidence type="ECO:0000255" key="4">
    <source>
        <dbReference type="PROSITE-ProRule" id="PRU00085"/>
    </source>
</evidence>
<evidence type="ECO:0000255" key="5">
    <source>
        <dbReference type="RuleBase" id="RU361145"/>
    </source>
</evidence>
<evidence type="ECO:0000269" key="6">
    <source>
    </source>
</evidence>
<evidence type="ECO:0000303" key="7">
    <source>
    </source>
</evidence>
<evidence type="ECO:0000305" key="8"/>
<evidence type="ECO:0000312" key="9">
    <source>
        <dbReference type="EMBL" id="BAM17914.1"/>
    </source>
</evidence>
<evidence type="ECO:0000312" key="10">
    <source>
        <dbReference type="EMBL" id="KPJ02301.1"/>
    </source>
</evidence>
<evidence type="ECO:0000312" key="11">
    <source>
        <dbReference type="Proteomes" id="UP000053268"/>
    </source>
</evidence>
<name>FRIH_PAPXU</name>
<keyword id="KW-1015">Disulfide bond</keyword>
<keyword id="KW-0333">Golgi apparatus</keyword>
<keyword id="KW-0408">Iron</keyword>
<keyword id="KW-0409">Iron storage</keyword>
<keyword id="KW-0479">Metal-binding</keyword>
<keyword id="KW-0560">Oxidoreductase</keyword>
<keyword id="KW-1185">Reference proteome</keyword>
<keyword id="KW-0964">Secreted</keyword>
<keyword id="KW-0732">Signal</keyword>
<protein>
    <recommendedName>
        <fullName evidence="7">Ferritin heavy chain</fullName>
        <shortName evidence="7">PxFerHCH</shortName>
        <ecNumber evidence="5">1.16.3.1</ecNumber>
    </recommendedName>
</protein>
<reference evidence="9" key="1">
    <citation type="journal article" date="2012" name="BMC Biol.">
        <title>Comprehensive microarray-based analysis for stage-specific larval camouflage pattern-associated genes in the swallowtail butterfly, Papilio xuthus.</title>
        <authorList>
            <person name="Futahashi R."/>
            <person name="Shirataki H."/>
            <person name="Narita T."/>
            <person name="Mita K."/>
            <person name="Fujiwara H."/>
        </authorList>
    </citation>
    <scope>NUCLEOTIDE SEQUENCE [MRNA]</scope>
    <source>
        <tissue evidence="9">Epidermis</tissue>
    </source>
</reference>
<reference evidence="11" key="2">
    <citation type="journal article" date="2015" name="Nat. Commun.">
        <title>Outbred genome sequencing and CRISPR/Cas9 gene editing in butterflies.</title>
        <authorList>
            <person name="Li X."/>
            <person name="Fan D."/>
            <person name="Zhang W."/>
            <person name="Liu G."/>
            <person name="Zhang L."/>
            <person name="Zhao L."/>
            <person name="Fang X."/>
            <person name="Chen L."/>
            <person name="Dong Y."/>
            <person name="Chen Y."/>
            <person name="Ding Y."/>
            <person name="Zhao R."/>
            <person name="Feng M."/>
            <person name="Zhu Y."/>
            <person name="Feng Y."/>
            <person name="Jiang X."/>
            <person name="Zhu D."/>
            <person name="Xiang H."/>
            <person name="Feng X."/>
            <person name="Li S."/>
            <person name="Wang J."/>
            <person name="Zhang G."/>
            <person name="Kronforst M.R."/>
            <person name="Wang W."/>
        </authorList>
    </citation>
    <scope>NUCLEOTIDE SEQUENCE [LARGE SCALE GENOMIC DNA]</scope>
    <source>
        <strain evidence="10">Ya'a_city_454_Px</strain>
    </source>
</reference>
<reference evidence="8" key="3">
    <citation type="journal article" date="2019" name="Arch. Insect Biochem. Physiol.">
        <title>Identification and functional analysis of an iron-binding protein, ferritin heavy chain subunit, from the swallowtail butterfly, Papilio xuthus.</title>
        <authorList>
            <person name="Lu Z.J."/>
            <person name="Xie Y.X."/>
            <person name="Yu H.Z."/>
            <person name="Toufeeq S."/>
            <person name="Wang J."/>
            <person name="Huang Y.L."/>
            <person name="Li N.Y."/>
            <person name="Ouyang Z.G."/>
        </authorList>
    </citation>
    <scope>FUNCTION</scope>
    <scope>DEVELOPMENTAL STAGE</scope>
    <scope>INDUCTION</scope>
</reference>
<proteinExistence type="evidence at transcript level"/>
<comment type="function">
    <text evidence="1 5 6">Stores iron in a soluble, non-toxic, readily available form (By similarity) (PubMed:31276235). Important for iron homeostasis. Iron is taken up in the ferrous form and deposited as ferric hydroxides after oxidation (By similarity). Ferritin is composed of a heavy (H) chain which is responsible for the oxidation and uptake of ferrous iron, and a light (L) chain which facilitates the nucleation of the ferrihydrite iron core (By similarity).</text>
</comment>
<comment type="catalytic activity">
    <reaction evidence="5">
        <text>4 Fe(2+) + O2 + 4 H(+) = 4 Fe(3+) + 2 H2O</text>
        <dbReference type="Rhea" id="RHEA:11148"/>
        <dbReference type="ChEBI" id="CHEBI:15377"/>
        <dbReference type="ChEBI" id="CHEBI:15378"/>
        <dbReference type="ChEBI" id="CHEBI:15379"/>
        <dbReference type="ChEBI" id="CHEBI:29033"/>
        <dbReference type="ChEBI" id="CHEBI:29034"/>
        <dbReference type="EC" id="1.16.3.1"/>
    </reaction>
</comment>
<comment type="subunit">
    <text evidence="1">Oligomer of 12 light (L) chains and 12 heavy (H) chains; L and H chains are disulfide-linked (By similarity). The functional molecule forms a roughly spherical shell with a diameter of 12 nm and contains a central cavity into which the insoluble ferric iron core is deposited (By similarity).</text>
</comment>
<comment type="subcellular location">
    <subcellularLocation>
        <location evidence="2">Golgi apparatus</location>
    </subcellularLocation>
    <subcellularLocation>
        <location evidence="2">Secreted</location>
    </subcellularLocation>
</comment>
<comment type="developmental stage">
    <text evidence="6">Expressed in fifth instar larvae; highly expressed in fat body, followed by hemolymph and to a lesser extent in integument, head, and midgut.</text>
</comment>
<comment type="induction">
    <text evidence="6">Up-regulated in midgut, fat body and hemolymph in response to bacteria E.coli or S.aureus infection.</text>
</comment>
<comment type="similarity">
    <text evidence="5">Belongs to the ferritin family.</text>
</comment>
<sequence length="211" mass="23731">MKAVLFAVAALLAVCIPISAKQCNVNPVNIPKGWITMQQSCRGSMRRQIQTEVGASLQYLAMGAHFSRDGINRPGFAKLFFDAASEEREHAMKLIDYLLMRGELETDVTSLIQIRAPERKSWESGVDALEHALKMETEVTKSIRSVIIACESDPKFNDYHLVDYLTGEFLEEQYKGQRDLAGKASTLKKMLDRHSSLGEFLFDKKLLGMDI</sequence>